<gene>
    <name evidence="1" type="primary">cbpA</name>
    <name type="ordered locus">SeAg_B1071</name>
</gene>
<sequence length="306" mass="34693">MELKDYYAIMGVKPTDDLKTIKTAYRRLARKYHPDVSKEPDAEARFKEVAEAWEVLSDEQRRAEYDQLWQHRNDPQFNRQFQQHEGQPYNAEDFDDIFSSIFGQHGRHSHHRHAARGHDIEIEVAVFLEETLEEHQRTISYSVPVYNAFGLVEREIPKTLNVKIPAGVSNGQRIRLKGQGTPGENGGPNGDLWLVIHIAPHPLFDIVNQDLEVVLPLAPWEAALGAKVSVPTLKERILLTIPPGSQAGQRLRIKGKGLASKKHTGDLYAIIKIVMPPKPDEKTAALWQQLADAQSSFDPRQQWGKA</sequence>
<dbReference type="EMBL" id="CP001138">
    <property type="protein sequence ID" value="ACH52605.1"/>
    <property type="molecule type" value="Genomic_DNA"/>
</dbReference>
<dbReference type="RefSeq" id="WP_000420603.1">
    <property type="nucleotide sequence ID" value="NC_011149.1"/>
</dbReference>
<dbReference type="SMR" id="B5F1Z5"/>
<dbReference type="KEGG" id="sea:SeAg_B1071"/>
<dbReference type="HOGENOM" id="CLU_017633_0_0_6"/>
<dbReference type="Proteomes" id="UP000008819">
    <property type="component" value="Chromosome"/>
</dbReference>
<dbReference type="GO" id="GO:0005737">
    <property type="term" value="C:cytoplasm"/>
    <property type="evidence" value="ECO:0007669"/>
    <property type="project" value="UniProtKB-UniRule"/>
</dbReference>
<dbReference type="GO" id="GO:0009295">
    <property type="term" value="C:nucleoid"/>
    <property type="evidence" value="ECO:0007669"/>
    <property type="project" value="UniProtKB-SubCell"/>
</dbReference>
<dbReference type="GO" id="GO:0003681">
    <property type="term" value="F:bent DNA binding"/>
    <property type="evidence" value="ECO:0007669"/>
    <property type="project" value="UniProtKB-UniRule"/>
</dbReference>
<dbReference type="GO" id="GO:0051082">
    <property type="term" value="F:unfolded protein binding"/>
    <property type="evidence" value="ECO:0007669"/>
    <property type="project" value="InterPro"/>
</dbReference>
<dbReference type="GO" id="GO:0051085">
    <property type="term" value="P:chaperone cofactor-dependent protein refolding"/>
    <property type="evidence" value="ECO:0007669"/>
    <property type="project" value="TreeGrafter"/>
</dbReference>
<dbReference type="GO" id="GO:0042026">
    <property type="term" value="P:protein refolding"/>
    <property type="evidence" value="ECO:0007669"/>
    <property type="project" value="TreeGrafter"/>
</dbReference>
<dbReference type="CDD" id="cd06257">
    <property type="entry name" value="DnaJ"/>
    <property type="match status" value="1"/>
</dbReference>
<dbReference type="CDD" id="cd10747">
    <property type="entry name" value="DnaJ_C"/>
    <property type="match status" value="1"/>
</dbReference>
<dbReference type="FunFam" id="1.10.287.110:FF:000013">
    <property type="entry name" value="Curved DNA-binding protein"/>
    <property type="match status" value="1"/>
</dbReference>
<dbReference type="FunFam" id="2.60.260.20:FF:000008">
    <property type="entry name" value="Curved DNA-binding protein"/>
    <property type="match status" value="1"/>
</dbReference>
<dbReference type="Gene3D" id="1.10.287.110">
    <property type="entry name" value="DnaJ domain"/>
    <property type="match status" value="1"/>
</dbReference>
<dbReference type="Gene3D" id="1.20.5.460">
    <property type="entry name" value="Single helix bin"/>
    <property type="match status" value="1"/>
</dbReference>
<dbReference type="Gene3D" id="2.60.260.20">
    <property type="entry name" value="Urease metallochaperone UreE, N-terminal domain"/>
    <property type="match status" value="2"/>
</dbReference>
<dbReference type="HAMAP" id="MF_01154">
    <property type="entry name" value="CbpA"/>
    <property type="match status" value="1"/>
</dbReference>
<dbReference type="InterPro" id="IPR023859">
    <property type="entry name" value="DNA-bd_curved-DNA"/>
</dbReference>
<dbReference type="InterPro" id="IPR002939">
    <property type="entry name" value="DnaJ_C"/>
</dbReference>
<dbReference type="InterPro" id="IPR001623">
    <property type="entry name" value="DnaJ_domain"/>
</dbReference>
<dbReference type="InterPro" id="IPR018253">
    <property type="entry name" value="DnaJ_domain_CS"/>
</dbReference>
<dbReference type="InterPro" id="IPR008971">
    <property type="entry name" value="HSP40/DnaJ_pept-bd"/>
</dbReference>
<dbReference type="InterPro" id="IPR036869">
    <property type="entry name" value="J_dom_sf"/>
</dbReference>
<dbReference type="NCBIfam" id="NF007618">
    <property type="entry name" value="PRK10266.1"/>
    <property type="match status" value="1"/>
</dbReference>
<dbReference type="PANTHER" id="PTHR43096">
    <property type="entry name" value="DNAJ HOMOLOG 1, MITOCHONDRIAL-RELATED"/>
    <property type="match status" value="1"/>
</dbReference>
<dbReference type="PANTHER" id="PTHR43096:SF52">
    <property type="entry name" value="DNAJ HOMOLOG 1, MITOCHONDRIAL-RELATED"/>
    <property type="match status" value="1"/>
</dbReference>
<dbReference type="Pfam" id="PF00226">
    <property type="entry name" value="DnaJ"/>
    <property type="match status" value="1"/>
</dbReference>
<dbReference type="Pfam" id="PF01556">
    <property type="entry name" value="DnaJ_C"/>
    <property type="match status" value="1"/>
</dbReference>
<dbReference type="PRINTS" id="PR00625">
    <property type="entry name" value="JDOMAIN"/>
</dbReference>
<dbReference type="SMART" id="SM00271">
    <property type="entry name" value="DnaJ"/>
    <property type="match status" value="1"/>
</dbReference>
<dbReference type="SUPFAM" id="SSF46565">
    <property type="entry name" value="Chaperone J-domain"/>
    <property type="match status" value="1"/>
</dbReference>
<dbReference type="SUPFAM" id="SSF49493">
    <property type="entry name" value="HSP40/DnaJ peptide-binding domain"/>
    <property type="match status" value="2"/>
</dbReference>
<dbReference type="PROSITE" id="PS00636">
    <property type="entry name" value="DNAJ_1"/>
    <property type="match status" value="1"/>
</dbReference>
<dbReference type="PROSITE" id="PS50076">
    <property type="entry name" value="DNAJ_2"/>
    <property type="match status" value="1"/>
</dbReference>
<evidence type="ECO:0000255" key="1">
    <source>
        <dbReference type="HAMAP-Rule" id="MF_01154"/>
    </source>
</evidence>
<accession>B5F1Z5</accession>
<proteinExistence type="inferred from homology"/>
<feature type="chain" id="PRO_1000137755" description="Curved DNA-binding protein">
    <location>
        <begin position="1"/>
        <end position="306"/>
    </location>
</feature>
<feature type="domain" description="J" evidence="1">
    <location>
        <begin position="5"/>
        <end position="69"/>
    </location>
</feature>
<comment type="function">
    <text evidence="1">DNA-binding protein that preferentially recognizes a curved DNA sequence. It is probably a functional analog of DnaJ; displays overlapping activities with DnaJ, but functions under different conditions, probably acting as a molecular chaperone in an adaptive response to environmental stresses other than heat shock. Lacks autonomous chaperone activity; binds native substrates and targets them for recognition by DnaK. Its activity is inhibited by the binding of CbpM.</text>
</comment>
<comment type="subcellular location">
    <subcellularLocation>
        <location evidence="1">Cytoplasm</location>
        <location evidence="1">Nucleoid</location>
    </subcellularLocation>
</comment>
<organism>
    <name type="scientific">Salmonella agona (strain SL483)</name>
    <dbReference type="NCBI Taxonomy" id="454166"/>
    <lineage>
        <taxon>Bacteria</taxon>
        <taxon>Pseudomonadati</taxon>
        <taxon>Pseudomonadota</taxon>
        <taxon>Gammaproteobacteria</taxon>
        <taxon>Enterobacterales</taxon>
        <taxon>Enterobacteriaceae</taxon>
        <taxon>Salmonella</taxon>
    </lineage>
</organism>
<protein>
    <recommendedName>
        <fullName evidence="1">Curved DNA-binding protein</fullName>
    </recommendedName>
</protein>
<reference key="1">
    <citation type="journal article" date="2011" name="J. Bacteriol.">
        <title>Comparative genomics of 28 Salmonella enterica isolates: evidence for CRISPR-mediated adaptive sublineage evolution.</title>
        <authorList>
            <person name="Fricke W.F."/>
            <person name="Mammel M.K."/>
            <person name="McDermott P.F."/>
            <person name="Tartera C."/>
            <person name="White D.G."/>
            <person name="Leclerc J.E."/>
            <person name="Ravel J."/>
            <person name="Cebula T.A."/>
        </authorList>
    </citation>
    <scope>NUCLEOTIDE SEQUENCE [LARGE SCALE GENOMIC DNA]</scope>
    <source>
        <strain>SL483</strain>
    </source>
</reference>
<keyword id="KW-0143">Chaperone</keyword>
<keyword id="KW-0963">Cytoplasm</keyword>
<keyword id="KW-0238">DNA-binding</keyword>
<name>CBPA_SALA4</name>